<comment type="function">
    <text evidence="1">Catalyzes the oxidation of 5,10-methylenetetrahydrofolate to 5,10-methenyltetrahydrofolate and then the hydrolysis of 5,10-methenyltetrahydrofolate to 10-formyltetrahydrofolate.</text>
</comment>
<comment type="catalytic activity">
    <reaction evidence="1">
        <text>(6R)-5,10-methylene-5,6,7,8-tetrahydrofolate + NADP(+) = (6R)-5,10-methenyltetrahydrofolate + NADPH</text>
        <dbReference type="Rhea" id="RHEA:22812"/>
        <dbReference type="ChEBI" id="CHEBI:15636"/>
        <dbReference type="ChEBI" id="CHEBI:57455"/>
        <dbReference type="ChEBI" id="CHEBI:57783"/>
        <dbReference type="ChEBI" id="CHEBI:58349"/>
        <dbReference type="EC" id="1.5.1.5"/>
    </reaction>
</comment>
<comment type="catalytic activity">
    <reaction evidence="1">
        <text>(6R)-5,10-methenyltetrahydrofolate + H2O = (6R)-10-formyltetrahydrofolate + H(+)</text>
        <dbReference type="Rhea" id="RHEA:23700"/>
        <dbReference type="ChEBI" id="CHEBI:15377"/>
        <dbReference type="ChEBI" id="CHEBI:15378"/>
        <dbReference type="ChEBI" id="CHEBI:57455"/>
        <dbReference type="ChEBI" id="CHEBI:195366"/>
        <dbReference type="EC" id="3.5.4.9"/>
    </reaction>
</comment>
<comment type="pathway">
    <text evidence="1">One-carbon metabolism; tetrahydrofolate interconversion.</text>
</comment>
<comment type="subunit">
    <text evidence="1">Homodimer.</text>
</comment>
<comment type="similarity">
    <text evidence="1">Belongs to the tetrahydrofolate dehydrogenase/cyclohydrolase family.</text>
</comment>
<comment type="sequence caution" evidence="2">
    <conflict type="erroneous initiation">
        <sequence resource="EMBL-CDS" id="ABQ79598"/>
    </conflict>
</comment>
<name>FOLD_PSEP1</name>
<feature type="chain" id="PRO_0000318785" description="Bifunctional protein FolD">
    <location>
        <begin position="1"/>
        <end position="284"/>
    </location>
</feature>
<feature type="binding site" evidence="1">
    <location>
        <begin position="166"/>
        <end position="168"/>
    </location>
    <ligand>
        <name>NADP(+)</name>
        <dbReference type="ChEBI" id="CHEBI:58349"/>
    </ligand>
</feature>
<feature type="binding site" evidence="1">
    <location>
        <position position="232"/>
    </location>
    <ligand>
        <name>NADP(+)</name>
        <dbReference type="ChEBI" id="CHEBI:58349"/>
    </ligand>
</feature>
<proteinExistence type="inferred from homology"/>
<accession>A5W638</accession>
<keyword id="KW-0028">Amino-acid biosynthesis</keyword>
<keyword id="KW-0368">Histidine biosynthesis</keyword>
<keyword id="KW-0378">Hydrolase</keyword>
<keyword id="KW-0486">Methionine biosynthesis</keyword>
<keyword id="KW-0511">Multifunctional enzyme</keyword>
<keyword id="KW-0521">NADP</keyword>
<keyword id="KW-0554">One-carbon metabolism</keyword>
<keyword id="KW-0560">Oxidoreductase</keyword>
<keyword id="KW-0658">Purine biosynthesis</keyword>
<evidence type="ECO:0000255" key="1">
    <source>
        <dbReference type="HAMAP-Rule" id="MF_01576"/>
    </source>
</evidence>
<evidence type="ECO:0000305" key="2"/>
<sequence length="284" mass="30623">MTAHLIDGKAIAASLRQQIAQRVVERRQQGLRTPGLAVILVGTDPASQVYVSHKRKDCEEVGFISQAFDLPSETTQQALTELIDRLNDDPAVDGILLQLPLPAHLDASLLLERIRPDKDVDGFHPYNIGRLAQRIPLLRPCTPKGIMTLLESTGQDLYGMNAVIVGASNIVGRPMAMELLLAGCTVTVCHRFTKDLAGHVGRADLVVVAAGKPGLVKGEWVKEGAIVIDVGINRQEDGKLVGDVVYETALPRAGWITPVPGGVGPMTRACLLENTLYAAEELHK</sequence>
<reference key="1">
    <citation type="submission" date="2007-05" db="EMBL/GenBank/DDBJ databases">
        <title>Complete sequence of Pseudomonas putida F1.</title>
        <authorList>
            <consortium name="US DOE Joint Genome Institute"/>
            <person name="Copeland A."/>
            <person name="Lucas S."/>
            <person name="Lapidus A."/>
            <person name="Barry K."/>
            <person name="Detter J.C."/>
            <person name="Glavina del Rio T."/>
            <person name="Hammon N."/>
            <person name="Israni S."/>
            <person name="Dalin E."/>
            <person name="Tice H."/>
            <person name="Pitluck S."/>
            <person name="Chain P."/>
            <person name="Malfatti S."/>
            <person name="Shin M."/>
            <person name="Vergez L."/>
            <person name="Schmutz J."/>
            <person name="Larimer F."/>
            <person name="Land M."/>
            <person name="Hauser L."/>
            <person name="Kyrpides N."/>
            <person name="Lykidis A."/>
            <person name="Parales R."/>
            <person name="Richardson P."/>
        </authorList>
    </citation>
    <scope>NUCLEOTIDE SEQUENCE [LARGE SCALE GENOMIC DNA]</scope>
    <source>
        <strain>ATCC 700007 / DSM 6899 / JCM 31910 / BCRC 17059 / LMG 24140 / F1</strain>
    </source>
</reference>
<dbReference type="EC" id="1.5.1.5" evidence="1"/>
<dbReference type="EC" id="3.5.4.9" evidence="1"/>
<dbReference type="EMBL" id="CP000712">
    <property type="protein sequence ID" value="ABQ79598.1"/>
    <property type="status" value="ALT_INIT"/>
    <property type="molecule type" value="Genomic_DNA"/>
</dbReference>
<dbReference type="SMR" id="A5W638"/>
<dbReference type="KEGG" id="ppf:Pput_3472"/>
<dbReference type="eggNOG" id="COG0190">
    <property type="taxonomic scope" value="Bacteria"/>
</dbReference>
<dbReference type="HOGENOM" id="CLU_034045_2_1_6"/>
<dbReference type="UniPathway" id="UPA00193"/>
<dbReference type="GO" id="GO:0005829">
    <property type="term" value="C:cytosol"/>
    <property type="evidence" value="ECO:0007669"/>
    <property type="project" value="TreeGrafter"/>
</dbReference>
<dbReference type="GO" id="GO:0004477">
    <property type="term" value="F:methenyltetrahydrofolate cyclohydrolase activity"/>
    <property type="evidence" value="ECO:0007669"/>
    <property type="project" value="UniProtKB-UniRule"/>
</dbReference>
<dbReference type="GO" id="GO:0004488">
    <property type="term" value="F:methylenetetrahydrofolate dehydrogenase (NADP+) activity"/>
    <property type="evidence" value="ECO:0007669"/>
    <property type="project" value="UniProtKB-UniRule"/>
</dbReference>
<dbReference type="GO" id="GO:0000105">
    <property type="term" value="P:L-histidine biosynthetic process"/>
    <property type="evidence" value="ECO:0007669"/>
    <property type="project" value="UniProtKB-KW"/>
</dbReference>
<dbReference type="GO" id="GO:0009086">
    <property type="term" value="P:methionine biosynthetic process"/>
    <property type="evidence" value="ECO:0007669"/>
    <property type="project" value="UniProtKB-KW"/>
</dbReference>
<dbReference type="GO" id="GO:0006164">
    <property type="term" value="P:purine nucleotide biosynthetic process"/>
    <property type="evidence" value="ECO:0007669"/>
    <property type="project" value="UniProtKB-KW"/>
</dbReference>
<dbReference type="GO" id="GO:0035999">
    <property type="term" value="P:tetrahydrofolate interconversion"/>
    <property type="evidence" value="ECO:0007669"/>
    <property type="project" value="UniProtKB-UniRule"/>
</dbReference>
<dbReference type="CDD" id="cd01080">
    <property type="entry name" value="NAD_bind_m-THF_DH_Cyclohyd"/>
    <property type="match status" value="1"/>
</dbReference>
<dbReference type="FunFam" id="3.40.50.10860:FF:000001">
    <property type="entry name" value="Bifunctional protein FolD"/>
    <property type="match status" value="1"/>
</dbReference>
<dbReference type="FunFam" id="3.40.50.720:FF:000006">
    <property type="entry name" value="Bifunctional protein FolD"/>
    <property type="match status" value="1"/>
</dbReference>
<dbReference type="Gene3D" id="3.40.50.10860">
    <property type="entry name" value="Leucine Dehydrogenase, chain A, domain 1"/>
    <property type="match status" value="1"/>
</dbReference>
<dbReference type="Gene3D" id="3.40.50.720">
    <property type="entry name" value="NAD(P)-binding Rossmann-like Domain"/>
    <property type="match status" value="1"/>
</dbReference>
<dbReference type="HAMAP" id="MF_01576">
    <property type="entry name" value="THF_DHG_CYH"/>
    <property type="match status" value="1"/>
</dbReference>
<dbReference type="InterPro" id="IPR046346">
    <property type="entry name" value="Aminoacid_DH-like_N_sf"/>
</dbReference>
<dbReference type="InterPro" id="IPR036291">
    <property type="entry name" value="NAD(P)-bd_dom_sf"/>
</dbReference>
<dbReference type="InterPro" id="IPR000672">
    <property type="entry name" value="THF_DH/CycHdrlase"/>
</dbReference>
<dbReference type="InterPro" id="IPR020630">
    <property type="entry name" value="THF_DH/CycHdrlase_cat_dom"/>
</dbReference>
<dbReference type="InterPro" id="IPR020631">
    <property type="entry name" value="THF_DH/CycHdrlase_NAD-bd_dom"/>
</dbReference>
<dbReference type="NCBIfam" id="NF008058">
    <property type="entry name" value="PRK10792.1"/>
    <property type="match status" value="1"/>
</dbReference>
<dbReference type="NCBIfam" id="NF010783">
    <property type="entry name" value="PRK14186.1"/>
    <property type="match status" value="1"/>
</dbReference>
<dbReference type="PANTHER" id="PTHR48099:SF5">
    <property type="entry name" value="C-1-TETRAHYDROFOLATE SYNTHASE, CYTOPLASMIC"/>
    <property type="match status" value="1"/>
</dbReference>
<dbReference type="PANTHER" id="PTHR48099">
    <property type="entry name" value="C-1-TETRAHYDROFOLATE SYNTHASE, CYTOPLASMIC-RELATED"/>
    <property type="match status" value="1"/>
</dbReference>
<dbReference type="Pfam" id="PF00763">
    <property type="entry name" value="THF_DHG_CYH"/>
    <property type="match status" value="1"/>
</dbReference>
<dbReference type="Pfam" id="PF02882">
    <property type="entry name" value="THF_DHG_CYH_C"/>
    <property type="match status" value="1"/>
</dbReference>
<dbReference type="PRINTS" id="PR00085">
    <property type="entry name" value="THFDHDRGNASE"/>
</dbReference>
<dbReference type="SUPFAM" id="SSF53223">
    <property type="entry name" value="Aminoacid dehydrogenase-like, N-terminal domain"/>
    <property type="match status" value="1"/>
</dbReference>
<dbReference type="SUPFAM" id="SSF51735">
    <property type="entry name" value="NAD(P)-binding Rossmann-fold domains"/>
    <property type="match status" value="1"/>
</dbReference>
<organism>
    <name type="scientific">Pseudomonas putida (strain ATCC 700007 / DSM 6899 / JCM 31910 / BCRC 17059 / LMG 24140 / F1)</name>
    <dbReference type="NCBI Taxonomy" id="351746"/>
    <lineage>
        <taxon>Bacteria</taxon>
        <taxon>Pseudomonadati</taxon>
        <taxon>Pseudomonadota</taxon>
        <taxon>Gammaproteobacteria</taxon>
        <taxon>Pseudomonadales</taxon>
        <taxon>Pseudomonadaceae</taxon>
        <taxon>Pseudomonas</taxon>
    </lineage>
</organism>
<gene>
    <name evidence="1" type="primary">folD</name>
    <name type="ordered locus">Pput_3472</name>
</gene>
<protein>
    <recommendedName>
        <fullName evidence="1">Bifunctional protein FolD</fullName>
    </recommendedName>
    <domain>
        <recommendedName>
            <fullName evidence="1">Methylenetetrahydrofolate dehydrogenase</fullName>
            <ecNumber evidence="1">1.5.1.5</ecNumber>
        </recommendedName>
    </domain>
    <domain>
        <recommendedName>
            <fullName evidence="1">Methenyltetrahydrofolate cyclohydrolase</fullName>
            <ecNumber evidence="1">3.5.4.9</ecNumber>
        </recommendedName>
    </domain>
</protein>